<proteinExistence type="inferred from homology"/>
<reference key="1">
    <citation type="submission" date="2009-07" db="EMBL/GenBank/DDBJ databases">
        <title>Complete sequence of Pectobacterium carotovorum subsp. carotovorum PC1.</title>
        <authorList>
            <consortium name="US DOE Joint Genome Institute"/>
            <person name="Lucas S."/>
            <person name="Copeland A."/>
            <person name="Lapidus A."/>
            <person name="Glavina del Rio T."/>
            <person name="Tice H."/>
            <person name="Bruce D."/>
            <person name="Goodwin L."/>
            <person name="Pitluck S."/>
            <person name="Munk A.C."/>
            <person name="Brettin T."/>
            <person name="Detter J.C."/>
            <person name="Han C."/>
            <person name="Tapia R."/>
            <person name="Larimer F."/>
            <person name="Land M."/>
            <person name="Hauser L."/>
            <person name="Kyrpides N."/>
            <person name="Mikhailova N."/>
            <person name="Balakrishnan V."/>
            <person name="Glasner J."/>
            <person name="Perna N.T."/>
        </authorList>
    </citation>
    <scope>NUCLEOTIDE SEQUENCE [LARGE SCALE GENOMIC DNA]</scope>
    <source>
        <strain>PC1</strain>
    </source>
</reference>
<dbReference type="EMBL" id="CP001657">
    <property type="protein sequence ID" value="ACT14836.1"/>
    <property type="molecule type" value="Genomic_DNA"/>
</dbReference>
<dbReference type="RefSeq" id="WP_015841926.1">
    <property type="nucleotide sequence ID" value="NC_012917.1"/>
</dbReference>
<dbReference type="SMR" id="C6DG73"/>
<dbReference type="STRING" id="561230.PC1_3821"/>
<dbReference type="GeneID" id="67792282"/>
<dbReference type="KEGG" id="pct:PC1_3821"/>
<dbReference type="eggNOG" id="COG0088">
    <property type="taxonomic scope" value="Bacteria"/>
</dbReference>
<dbReference type="HOGENOM" id="CLU_041575_5_2_6"/>
<dbReference type="OrthoDB" id="9803201at2"/>
<dbReference type="Proteomes" id="UP000002736">
    <property type="component" value="Chromosome"/>
</dbReference>
<dbReference type="GO" id="GO:1990904">
    <property type="term" value="C:ribonucleoprotein complex"/>
    <property type="evidence" value="ECO:0007669"/>
    <property type="project" value="UniProtKB-KW"/>
</dbReference>
<dbReference type="GO" id="GO:0005840">
    <property type="term" value="C:ribosome"/>
    <property type="evidence" value="ECO:0007669"/>
    <property type="project" value="UniProtKB-KW"/>
</dbReference>
<dbReference type="GO" id="GO:0019843">
    <property type="term" value="F:rRNA binding"/>
    <property type="evidence" value="ECO:0007669"/>
    <property type="project" value="UniProtKB-UniRule"/>
</dbReference>
<dbReference type="GO" id="GO:0003735">
    <property type="term" value="F:structural constituent of ribosome"/>
    <property type="evidence" value="ECO:0007669"/>
    <property type="project" value="InterPro"/>
</dbReference>
<dbReference type="GO" id="GO:0006412">
    <property type="term" value="P:translation"/>
    <property type="evidence" value="ECO:0007669"/>
    <property type="project" value="UniProtKB-UniRule"/>
</dbReference>
<dbReference type="FunFam" id="3.40.1370.10:FF:000001">
    <property type="entry name" value="50S ribosomal protein L4"/>
    <property type="match status" value="1"/>
</dbReference>
<dbReference type="Gene3D" id="3.40.1370.10">
    <property type="match status" value="1"/>
</dbReference>
<dbReference type="HAMAP" id="MF_01328_B">
    <property type="entry name" value="Ribosomal_uL4_B"/>
    <property type="match status" value="1"/>
</dbReference>
<dbReference type="InterPro" id="IPR002136">
    <property type="entry name" value="Ribosomal_uL4"/>
</dbReference>
<dbReference type="InterPro" id="IPR013005">
    <property type="entry name" value="Ribosomal_uL4-like"/>
</dbReference>
<dbReference type="InterPro" id="IPR023574">
    <property type="entry name" value="Ribosomal_uL4_dom_sf"/>
</dbReference>
<dbReference type="NCBIfam" id="TIGR03953">
    <property type="entry name" value="rplD_bact"/>
    <property type="match status" value="1"/>
</dbReference>
<dbReference type="PANTHER" id="PTHR10746">
    <property type="entry name" value="50S RIBOSOMAL PROTEIN L4"/>
    <property type="match status" value="1"/>
</dbReference>
<dbReference type="PANTHER" id="PTHR10746:SF6">
    <property type="entry name" value="LARGE RIBOSOMAL SUBUNIT PROTEIN UL4M"/>
    <property type="match status" value="1"/>
</dbReference>
<dbReference type="Pfam" id="PF00573">
    <property type="entry name" value="Ribosomal_L4"/>
    <property type="match status" value="1"/>
</dbReference>
<dbReference type="SUPFAM" id="SSF52166">
    <property type="entry name" value="Ribosomal protein L4"/>
    <property type="match status" value="1"/>
</dbReference>
<feature type="chain" id="PRO_1000214579" description="Large ribosomal subunit protein uL4">
    <location>
        <begin position="1"/>
        <end position="201"/>
    </location>
</feature>
<feature type="region of interest" description="Disordered" evidence="2">
    <location>
        <begin position="44"/>
        <end position="71"/>
    </location>
</feature>
<sequence>MELVLKDAQSALTVSETTFGRDFNEALVHQVVVAYAAGARQGTRAQKTRAEVTGSGKKPWRQKGTGRARSGSIKSPIWRSGGVTFAAKPQDHSQKVNKKMYRGALKSILSELVRQDRLIVVEKFSVEAPKTKLLAQKLKEMALEDVLIITGELDENLFLAARNLYKVDVRDAAAIDPVSLIAFDKVVMTADAVKQVEEMLA</sequence>
<comment type="function">
    <text evidence="1">One of the primary rRNA binding proteins, this protein initially binds near the 5'-end of the 23S rRNA. It is important during the early stages of 50S assembly. It makes multiple contacts with different domains of the 23S rRNA in the assembled 50S subunit and ribosome.</text>
</comment>
<comment type="function">
    <text evidence="1">Forms part of the polypeptide exit tunnel.</text>
</comment>
<comment type="subunit">
    <text evidence="1">Part of the 50S ribosomal subunit.</text>
</comment>
<comment type="similarity">
    <text evidence="1">Belongs to the universal ribosomal protein uL4 family.</text>
</comment>
<protein>
    <recommendedName>
        <fullName evidence="1">Large ribosomal subunit protein uL4</fullName>
    </recommendedName>
    <alternativeName>
        <fullName evidence="3">50S ribosomal protein L4</fullName>
    </alternativeName>
</protein>
<accession>C6DG73</accession>
<name>RL4_PECCP</name>
<keyword id="KW-0687">Ribonucleoprotein</keyword>
<keyword id="KW-0689">Ribosomal protein</keyword>
<keyword id="KW-0694">RNA-binding</keyword>
<keyword id="KW-0699">rRNA-binding</keyword>
<evidence type="ECO:0000255" key="1">
    <source>
        <dbReference type="HAMAP-Rule" id="MF_01328"/>
    </source>
</evidence>
<evidence type="ECO:0000256" key="2">
    <source>
        <dbReference type="SAM" id="MobiDB-lite"/>
    </source>
</evidence>
<evidence type="ECO:0000305" key="3"/>
<gene>
    <name evidence="1" type="primary">rplD</name>
    <name type="ordered locus">PC1_3821</name>
</gene>
<organism>
    <name type="scientific">Pectobacterium carotovorum subsp. carotovorum (strain PC1)</name>
    <dbReference type="NCBI Taxonomy" id="561230"/>
    <lineage>
        <taxon>Bacteria</taxon>
        <taxon>Pseudomonadati</taxon>
        <taxon>Pseudomonadota</taxon>
        <taxon>Gammaproteobacteria</taxon>
        <taxon>Enterobacterales</taxon>
        <taxon>Pectobacteriaceae</taxon>
        <taxon>Pectobacterium</taxon>
    </lineage>
</organism>